<organism>
    <name type="scientific">Pyrus pyrifolia</name>
    <name type="common">Chinese pear</name>
    <name type="synonym">Pyrus serotina</name>
    <dbReference type="NCBI Taxonomy" id="3767"/>
    <lineage>
        <taxon>Eukaryota</taxon>
        <taxon>Viridiplantae</taxon>
        <taxon>Streptophyta</taxon>
        <taxon>Embryophyta</taxon>
        <taxon>Tracheophyta</taxon>
        <taxon>Spermatophyta</taxon>
        <taxon>Magnoliopsida</taxon>
        <taxon>eudicotyledons</taxon>
        <taxon>Gunneridae</taxon>
        <taxon>Pentapetalae</taxon>
        <taxon>rosids</taxon>
        <taxon>fabids</taxon>
        <taxon>Rosales</taxon>
        <taxon>Rosaceae</taxon>
        <taxon>Amygdaloideae</taxon>
        <taxon>Maleae</taxon>
        <taxon>Pyrus</taxon>
    </lineage>
</organism>
<protein>
    <recommendedName>
        <fullName>Chlorophyll a-b binding protein 1A, chloroplastic</fullName>
    </recommendedName>
    <alternativeName>
        <fullName>LHCII type II CAB-1A</fullName>
        <shortName>LHCP</shortName>
    </alternativeName>
</protein>
<dbReference type="EMBL" id="D00571">
    <property type="protein sequence ID" value="BAA00449.1"/>
    <property type="molecule type" value="mRNA"/>
</dbReference>
<dbReference type="SMR" id="P24006"/>
<dbReference type="GO" id="GO:0009535">
    <property type="term" value="C:chloroplast thylakoid membrane"/>
    <property type="evidence" value="ECO:0007669"/>
    <property type="project" value="UniProtKB-SubCell"/>
</dbReference>
<dbReference type="GO" id="GO:0009522">
    <property type="term" value="C:photosystem I"/>
    <property type="evidence" value="ECO:0007669"/>
    <property type="project" value="UniProtKB-KW"/>
</dbReference>
<dbReference type="GO" id="GO:0009523">
    <property type="term" value="C:photosystem II"/>
    <property type="evidence" value="ECO:0007669"/>
    <property type="project" value="UniProtKB-KW"/>
</dbReference>
<dbReference type="GO" id="GO:0016168">
    <property type="term" value="F:chlorophyll binding"/>
    <property type="evidence" value="ECO:0007669"/>
    <property type="project" value="UniProtKB-KW"/>
</dbReference>
<dbReference type="GO" id="GO:0046872">
    <property type="term" value="F:metal ion binding"/>
    <property type="evidence" value="ECO:0007669"/>
    <property type="project" value="UniProtKB-KW"/>
</dbReference>
<dbReference type="GO" id="GO:0009765">
    <property type="term" value="P:photosynthesis, light harvesting"/>
    <property type="evidence" value="ECO:0007669"/>
    <property type="project" value="InterPro"/>
</dbReference>
<dbReference type="FunFam" id="1.10.3460.10:FF:000001">
    <property type="entry name" value="Chlorophyll a-b binding protein, chloroplastic"/>
    <property type="match status" value="1"/>
</dbReference>
<dbReference type="Gene3D" id="1.10.3460.10">
    <property type="entry name" value="Chlorophyll a/b binding protein domain"/>
    <property type="match status" value="1"/>
</dbReference>
<dbReference type="InterPro" id="IPR001344">
    <property type="entry name" value="Chloro_AB-bd_pln"/>
</dbReference>
<dbReference type="InterPro" id="IPR022796">
    <property type="entry name" value="Chloroa_b-bind"/>
</dbReference>
<dbReference type="PANTHER" id="PTHR21649">
    <property type="entry name" value="CHLOROPHYLL A/B BINDING PROTEIN"/>
    <property type="match status" value="1"/>
</dbReference>
<dbReference type="Pfam" id="PF00504">
    <property type="entry name" value="Chloroa_b-bind"/>
    <property type="match status" value="1"/>
</dbReference>
<dbReference type="SUPFAM" id="SSF103511">
    <property type="entry name" value="Chlorophyll a-b binding protein"/>
    <property type="match status" value="1"/>
</dbReference>
<feature type="transit peptide" description="Chloroplast" evidence="4">
    <location>
        <begin position="1"/>
        <end position="45"/>
    </location>
</feature>
<feature type="chain" id="PRO_0000003694" description="Chlorophyll a-b binding protein 1A, chloroplastic">
    <location>
        <begin position="46"/>
        <end position="278"/>
    </location>
</feature>
<feature type="transmembrane region" description="Helical" evidence="4">
    <location>
        <begin position="112"/>
        <end position="132"/>
    </location>
</feature>
<feature type="transmembrane region" description="Helical" evidence="4">
    <location>
        <begin position="164"/>
        <end position="184"/>
    </location>
</feature>
<feature type="transmembrane region" description="Helical" evidence="4">
    <location>
        <begin position="232"/>
        <end position="252"/>
    </location>
</feature>
<feature type="binding site" description="axial binding residue" evidence="3">
    <location>
        <position position="70"/>
    </location>
    <ligand>
        <name>chlorophyll b</name>
        <dbReference type="ChEBI" id="CHEBI:61721"/>
        <label>1</label>
    </ligand>
    <ligandPart>
        <name>Mg</name>
        <dbReference type="ChEBI" id="CHEBI:25107"/>
    </ligandPart>
</feature>
<feature type="binding site" evidence="1">
    <location>
        <position position="92"/>
    </location>
    <ligand>
        <name>chlorophyll a</name>
        <dbReference type="ChEBI" id="CHEBI:58416"/>
        <label>1</label>
    </ligand>
</feature>
<feature type="binding site" evidence="1">
    <location>
        <position position="98"/>
    </location>
    <ligand>
        <name>chlorophyll a</name>
        <dbReference type="ChEBI" id="CHEBI:58416"/>
        <label>1</label>
    </ligand>
</feature>
<feature type="binding site" description="axial binding residue" evidence="3">
    <location>
        <position position="111"/>
    </location>
    <ligand>
        <name>chlorophyll a</name>
        <dbReference type="ChEBI" id="CHEBI:58416"/>
        <label>1</label>
    </ligand>
    <ligandPart>
        <name>Mg</name>
        <dbReference type="ChEBI" id="CHEBI:25107"/>
    </ligandPart>
</feature>
<feature type="binding site" description="axial binding residue" evidence="3">
    <location>
        <position position="114"/>
    </location>
    <ligand>
        <name>chlorophyll a</name>
        <dbReference type="ChEBI" id="CHEBI:58416"/>
        <label>2</label>
    </ligand>
    <ligandPart>
        <name>Mg</name>
        <dbReference type="ChEBI" id="CHEBI:25107"/>
    </ligandPart>
</feature>
<feature type="binding site" evidence="1">
    <location>
        <position position="116"/>
    </location>
    <ligand>
        <name>chlorophyll b</name>
        <dbReference type="ChEBI" id="CHEBI:61721"/>
        <label>2</label>
    </ligand>
</feature>
<feature type="binding site" evidence="1">
    <location>
        <position position="149"/>
    </location>
    <ligand>
        <name>chlorophyll a</name>
        <dbReference type="ChEBI" id="CHEBI:58416"/>
        <label>3</label>
    </ligand>
</feature>
<feature type="binding site" evidence="1">
    <location>
        <position position="159"/>
    </location>
    <ligand>
        <name>chlorophyll a</name>
        <dbReference type="ChEBI" id="CHEBI:58416"/>
        <label>3</label>
    </ligand>
</feature>
<feature type="binding site" description="axial binding residue" evidence="1">
    <location>
        <position position="165"/>
    </location>
    <ligand>
        <name>chlorophyll b</name>
        <dbReference type="ChEBI" id="CHEBI:61721"/>
        <label>2</label>
    </ligand>
    <ligandPart>
        <name>Mg</name>
        <dbReference type="ChEBI" id="CHEBI:25107"/>
    </ligandPart>
</feature>
<feature type="binding site" evidence="1">
    <location>
        <position position="169"/>
    </location>
    <ligand>
        <name>chlorophyll b</name>
        <dbReference type="ChEBI" id="CHEBI:61721"/>
        <label>3</label>
    </ligand>
</feature>
<feature type="binding site" evidence="1">
    <location>
        <position position="177"/>
    </location>
    <ligand>
        <name>chlorophyll b</name>
        <dbReference type="ChEBI" id="CHEBI:61721"/>
        <label>4</label>
    </ligand>
</feature>
<feature type="binding site" evidence="2">
    <location>
        <position position="177"/>
    </location>
    <ligand>
        <name>chlorophyll b</name>
        <dbReference type="ChEBI" id="CHEBI:61721"/>
        <label>5</label>
    </ligand>
</feature>
<feature type="binding site" description="axial binding residue" evidence="3">
    <location>
        <position position="185"/>
    </location>
    <ligand>
        <name>chlorophyll b</name>
        <dbReference type="ChEBI" id="CHEBI:61721"/>
        <label>3</label>
    </ligand>
    <ligandPart>
        <name>Mg</name>
        <dbReference type="ChEBI" id="CHEBI:25107"/>
    </ligandPart>
</feature>
<feature type="binding site" evidence="1">
    <location>
        <position position="188"/>
    </location>
    <ligand>
        <name>chlorophyll b</name>
        <dbReference type="ChEBI" id="CHEBI:61721"/>
        <label>4</label>
    </ligand>
</feature>
<feature type="binding site" evidence="1">
    <location>
        <position position="194"/>
    </location>
    <ligand>
        <name>chlorophyll b</name>
        <dbReference type="ChEBI" id="CHEBI:61721"/>
        <label>2</label>
    </ligand>
</feature>
<feature type="binding site" evidence="1">
    <location>
        <position position="225"/>
    </location>
    <ligand>
        <name>chlorophyll a</name>
        <dbReference type="ChEBI" id="CHEBI:58416"/>
        <label>5</label>
    </ligand>
</feature>
<feature type="binding site" description="axial binding residue" evidence="3">
    <location>
        <position position="226"/>
    </location>
    <ligand>
        <name>chlorophyll a</name>
        <dbReference type="ChEBI" id="CHEBI:58416"/>
        <label>3</label>
    </ligand>
    <ligandPart>
        <name>Mg</name>
        <dbReference type="ChEBI" id="CHEBI:25107"/>
    </ligandPart>
</feature>
<feature type="binding site" description="axial binding residue" evidence="3">
    <location>
        <position position="229"/>
    </location>
    <ligand>
        <name>chlorophyll a</name>
        <dbReference type="ChEBI" id="CHEBI:58416"/>
        <label>4</label>
    </ligand>
    <ligandPart>
        <name>Mg</name>
        <dbReference type="ChEBI" id="CHEBI:25107"/>
    </ligandPart>
</feature>
<feature type="binding site" evidence="1">
    <location>
        <position position="231"/>
    </location>
    <ligand>
        <name>chlorophyll a</name>
        <dbReference type="ChEBI" id="CHEBI:58416"/>
        <label>1</label>
    </ligand>
</feature>
<feature type="binding site" description="axial binding residue" evidence="3">
    <location>
        <position position="243"/>
    </location>
    <ligand>
        <name>chlorophyll a</name>
        <dbReference type="ChEBI" id="CHEBI:58416"/>
        <label>5</label>
    </ligand>
    <ligandPart>
        <name>Mg</name>
        <dbReference type="ChEBI" id="CHEBI:25107"/>
    </ligandPart>
</feature>
<feature type="binding site" description="axial binding residue" evidence="3">
    <location>
        <position position="258"/>
    </location>
    <ligand>
        <name>chlorophyll a</name>
        <dbReference type="ChEBI" id="CHEBI:58416"/>
        <label>6</label>
    </ligand>
    <ligandPart>
        <name>Mg</name>
        <dbReference type="ChEBI" id="CHEBI:25107"/>
    </ligandPart>
</feature>
<feature type="binding site" evidence="1">
    <location>
        <position position="267"/>
    </location>
    <ligand>
        <name>chlorophyll a</name>
        <dbReference type="ChEBI" id="CHEBI:58416"/>
        <label>6</label>
    </ligand>
</feature>
<feature type="binding site" evidence="1">
    <location>
        <position position="274"/>
    </location>
    <ligand>
        <name>chlorophyll b</name>
        <dbReference type="ChEBI" id="CHEBI:61721"/>
        <label>5</label>
    </ligand>
</feature>
<feature type="modified residue" description="N2-acetylarginine" evidence="1">
    <location>
        <position position="46"/>
    </location>
</feature>
<reference key="1">
    <citation type="submission" date="1991-03" db="EMBL/GenBank/DDBJ databases">
        <authorList>
            <person name="Kano-Murakami Y."/>
        </authorList>
    </citation>
    <scope>NUCLEOTIDE SEQUENCE [MRNA]</scope>
</reference>
<evidence type="ECO:0000250" key="1"/>
<evidence type="ECO:0000250" key="2">
    <source>
        <dbReference type="UniProtKB" id="P07371"/>
    </source>
</evidence>
<evidence type="ECO:0000250" key="3">
    <source>
        <dbReference type="UniProtKB" id="P12333"/>
    </source>
</evidence>
<evidence type="ECO:0000255" key="4"/>
<evidence type="ECO:0000305" key="5"/>
<name>CB2A_PYRPY</name>
<keyword id="KW-0007">Acetylation</keyword>
<keyword id="KW-0148">Chlorophyll</keyword>
<keyword id="KW-0150">Chloroplast</keyword>
<keyword id="KW-0157">Chromophore</keyword>
<keyword id="KW-0460">Magnesium</keyword>
<keyword id="KW-0472">Membrane</keyword>
<keyword id="KW-0479">Metal-binding</keyword>
<keyword id="KW-0597">Phosphoprotein</keyword>
<keyword id="KW-0602">Photosynthesis</keyword>
<keyword id="KW-0603">Photosystem I</keyword>
<keyword id="KW-0604">Photosystem II</keyword>
<keyword id="KW-0934">Plastid</keyword>
<keyword id="KW-0793">Thylakoid</keyword>
<keyword id="KW-0809">Transit peptide</keyword>
<keyword id="KW-0812">Transmembrane</keyword>
<keyword id="KW-1133">Transmembrane helix</keyword>
<comment type="function">
    <text>The light-harvesting complex (LHC) functions as a light receptor, it captures and delivers excitation energy to photosystems with which it is closely associated.</text>
</comment>
<comment type="cofactor">
    <text evidence="1">Binds at least 14 chlorophylls (8 Chl-a and 6 Chl-b) and carotenoids such as lutein and neoxanthin.</text>
</comment>
<comment type="subunit">
    <text>The LHC complex consists of chlorophyll a-b binding proteins.</text>
</comment>
<comment type="subcellular location">
    <subcellularLocation>
        <location>Plastid</location>
        <location>Chloroplast thylakoid membrane</location>
        <topology>Multi-pass membrane protein</topology>
    </subcellularLocation>
</comment>
<comment type="domain">
    <text>The N-terminus of the protein extends into the stroma where it is involved with adhesion of granal membranes and post-translational modifications; both are believed to mediate the distribution of excitation energy between photosystems I and II.</text>
</comment>
<comment type="PTM">
    <text evidence="1">Photoregulated by reversible phosphorylation of its threonine residues.</text>
</comment>
<comment type="similarity">
    <text evidence="5">Belongs to the light-harvesting chlorophyll a/b-binding (LHC) protein family.</text>
</comment>
<proteinExistence type="evidence at transcript level"/>
<accession>P24006</accession>
<sequence>MATTMASCGIGSRCAFAGAQLSSVKPQNNQLLGVGGAHGEARLTMRKATGRKSVAASIDSPWYGPDRVMYLGPFSGEPPSYLTGEFPGDYGWDTAGLSADPETFAKNRELEVIHSRWAMLGALGCVFPELLARNGVKFGEAVWFKAGAQIFSEGGLDYLGSPQLIHAQSILAIWACQVILMGAIEGYRVAGGPLGEVTDPIYPGGNFDPLGLADDPDAFADVKVKEIKNGRLAMFSMFGFFVQAIVTGKGPIENLADHLADPVNNNAWAYATNFVPGK</sequence>